<reference key="1">
    <citation type="journal article" date="2010" name="Genome Biol.">
        <title>Structure and dynamics of the pan-genome of Streptococcus pneumoniae and closely related species.</title>
        <authorList>
            <person name="Donati C."/>
            <person name="Hiller N.L."/>
            <person name="Tettelin H."/>
            <person name="Muzzi A."/>
            <person name="Croucher N.J."/>
            <person name="Angiuoli S.V."/>
            <person name="Oggioni M."/>
            <person name="Dunning Hotopp J.C."/>
            <person name="Hu F.Z."/>
            <person name="Riley D.R."/>
            <person name="Covacci A."/>
            <person name="Mitchell T.J."/>
            <person name="Bentley S.D."/>
            <person name="Kilian M."/>
            <person name="Ehrlich G.D."/>
            <person name="Rappuoli R."/>
            <person name="Moxon E.R."/>
            <person name="Masignani V."/>
        </authorList>
    </citation>
    <scope>NUCLEOTIDE SEQUENCE [LARGE SCALE GENOMIC DNA]</scope>
    <source>
        <strain>P1031</strain>
    </source>
</reference>
<name>XPT_STRZP</name>
<accession>C1CMF7</accession>
<evidence type="ECO:0000255" key="1">
    <source>
        <dbReference type="HAMAP-Rule" id="MF_01184"/>
    </source>
</evidence>
<dbReference type="EC" id="2.4.2.22" evidence="1"/>
<dbReference type="EMBL" id="CP000920">
    <property type="protein sequence ID" value="ACO21532.1"/>
    <property type="molecule type" value="Genomic_DNA"/>
</dbReference>
<dbReference type="RefSeq" id="WP_000770423.1">
    <property type="nucleotide sequence ID" value="NC_012467.1"/>
</dbReference>
<dbReference type="SMR" id="C1CMF7"/>
<dbReference type="KEGG" id="spp:SPP_1846"/>
<dbReference type="HOGENOM" id="CLU_099015_0_0_9"/>
<dbReference type="UniPathway" id="UPA00602">
    <property type="reaction ID" value="UER00658"/>
</dbReference>
<dbReference type="GO" id="GO:0005737">
    <property type="term" value="C:cytoplasm"/>
    <property type="evidence" value="ECO:0007669"/>
    <property type="project" value="UniProtKB-SubCell"/>
</dbReference>
<dbReference type="GO" id="GO:0000310">
    <property type="term" value="F:xanthine phosphoribosyltransferase activity"/>
    <property type="evidence" value="ECO:0007669"/>
    <property type="project" value="UniProtKB-UniRule"/>
</dbReference>
<dbReference type="GO" id="GO:0006166">
    <property type="term" value="P:purine ribonucleoside salvage"/>
    <property type="evidence" value="ECO:0007669"/>
    <property type="project" value="UniProtKB-KW"/>
</dbReference>
<dbReference type="GO" id="GO:0046110">
    <property type="term" value="P:xanthine metabolic process"/>
    <property type="evidence" value="ECO:0007669"/>
    <property type="project" value="InterPro"/>
</dbReference>
<dbReference type="GO" id="GO:0032265">
    <property type="term" value="P:XMP salvage"/>
    <property type="evidence" value="ECO:0007669"/>
    <property type="project" value="UniProtKB-UniRule"/>
</dbReference>
<dbReference type="CDD" id="cd06223">
    <property type="entry name" value="PRTases_typeI"/>
    <property type="match status" value="1"/>
</dbReference>
<dbReference type="Gene3D" id="3.40.50.2020">
    <property type="match status" value="1"/>
</dbReference>
<dbReference type="HAMAP" id="MF_01184">
    <property type="entry name" value="XPRTase"/>
    <property type="match status" value="1"/>
</dbReference>
<dbReference type="InterPro" id="IPR000836">
    <property type="entry name" value="PRibTrfase_dom"/>
</dbReference>
<dbReference type="InterPro" id="IPR029057">
    <property type="entry name" value="PRTase-like"/>
</dbReference>
<dbReference type="InterPro" id="IPR050118">
    <property type="entry name" value="Pur/Pyrimidine_PRTase"/>
</dbReference>
<dbReference type="InterPro" id="IPR010079">
    <property type="entry name" value="Xanthine_PRibTrfase"/>
</dbReference>
<dbReference type="NCBIfam" id="NF006671">
    <property type="entry name" value="PRK09219.1"/>
    <property type="match status" value="1"/>
</dbReference>
<dbReference type="NCBIfam" id="TIGR01744">
    <property type="entry name" value="XPRTase"/>
    <property type="match status" value="1"/>
</dbReference>
<dbReference type="PANTHER" id="PTHR43864">
    <property type="entry name" value="HYPOXANTHINE/GUANINE PHOSPHORIBOSYLTRANSFERASE"/>
    <property type="match status" value="1"/>
</dbReference>
<dbReference type="PANTHER" id="PTHR43864:SF1">
    <property type="entry name" value="XANTHINE PHOSPHORIBOSYLTRANSFERASE"/>
    <property type="match status" value="1"/>
</dbReference>
<dbReference type="Pfam" id="PF00156">
    <property type="entry name" value="Pribosyltran"/>
    <property type="match status" value="1"/>
</dbReference>
<dbReference type="SUPFAM" id="SSF53271">
    <property type="entry name" value="PRTase-like"/>
    <property type="match status" value="1"/>
</dbReference>
<keyword id="KW-0963">Cytoplasm</keyword>
<keyword id="KW-0328">Glycosyltransferase</keyword>
<keyword id="KW-0660">Purine salvage</keyword>
<keyword id="KW-0808">Transferase</keyword>
<feature type="chain" id="PRO_1000164459" description="Xanthine phosphoribosyltransferase">
    <location>
        <begin position="1"/>
        <end position="193"/>
    </location>
</feature>
<feature type="binding site" evidence="1">
    <location>
        <position position="20"/>
    </location>
    <ligand>
        <name>xanthine</name>
        <dbReference type="ChEBI" id="CHEBI:17712"/>
    </ligand>
</feature>
<feature type="binding site" evidence="1">
    <location>
        <position position="27"/>
    </location>
    <ligand>
        <name>xanthine</name>
        <dbReference type="ChEBI" id="CHEBI:17712"/>
    </ligand>
</feature>
<feature type="binding site" evidence="1">
    <location>
        <begin position="128"/>
        <end position="132"/>
    </location>
    <ligand>
        <name>5-phospho-alpha-D-ribose 1-diphosphate</name>
        <dbReference type="ChEBI" id="CHEBI:58017"/>
    </ligand>
</feature>
<feature type="binding site" evidence="1">
    <location>
        <position position="156"/>
    </location>
    <ligand>
        <name>xanthine</name>
        <dbReference type="ChEBI" id="CHEBI:17712"/>
    </ligand>
</feature>
<organism>
    <name type="scientific">Streptococcus pneumoniae (strain P1031)</name>
    <dbReference type="NCBI Taxonomy" id="488223"/>
    <lineage>
        <taxon>Bacteria</taxon>
        <taxon>Bacillati</taxon>
        <taxon>Bacillota</taxon>
        <taxon>Bacilli</taxon>
        <taxon>Lactobacillales</taxon>
        <taxon>Streptococcaceae</taxon>
        <taxon>Streptococcus</taxon>
    </lineage>
</organism>
<comment type="function">
    <text evidence="1">Converts the preformed base xanthine, a product of nucleic acid breakdown, to xanthosine 5'-monophosphate (XMP), so it can be reused for RNA or DNA synthesis.</text>
</comment>
<comment type="catalytic activity">
    <reaction evidence="1">
        <text>XMP + diphosphate = xanthine + 5-phospho-alpha-D-ribose 1-diphosphate</text>
        <dbReference type="Rhea" id="RHEA:10800"/>
        <dbReference type="ChEBI" id="CHEBI:17712"/>
        <dbReference type="ChEBI" id="CHEBI:33019"/>
        <dbReference type="ChEBI" id="CHEBI:57464"/>
        <dbReference type="ChEBI" id="CHEBI:58017"/>
        <dbReference type="EC" id="2.4.2.22"/>
    </reaction>
</comment>
<comment type="pathway">
    <text evidence="1">Purine metabolism; XMP biosynthesis via salvage pathway; XMP from xanthine: step 1/1.</text>
</comment>
<comment type="subunit">
    <text evidence="1">Homodimer.</text>
</comment>
<comment type="subcellular location">
    <subcellularLocation>
        <location evidence="1">Cytoplasm</location>
    </subcellularLocation>
</comment>
<comment type="similarity">
    <text evidence="1">Belongs to the purine/pyrimidine phosphoribosyltransferase family. Xpt subfamily.</text>
</comment>
<protein>
    <recommendedName>
        <fullName evidence="1">Xanthine phosphoribosyltransferase</fullName>
        <shortName evidence="1">XPRTase</shortName>
        <ecNumber evidence="1">2.4.2.22</ecNumber>
    </recommendedName>
</protein>
<gene>
    <name evidence="1" type="primary">xpt</name>
    <name type="ordered locus">SPP_1846</name>
</gene>
<sequence length="193" mass="21013">MKLLEERILKDGHILGDNILKVDSFLTHQVDFSLMREIGRVFAEKFAATGITKVVTIEASGIAPAVFTAEALNVPMIFAKKAKNITMNEGILTAQVYSFTKQVTSTVSIAGKFLSPEDKVLIIDDFLANGQAAKGLIQIIEQAGATVQAIGIVIEKSFQDGRDLLEKAGYPVLSLARLDRFENGQVVFKEADL</sequence>
<proteinExistence type="inferred from homology"/>